<gene>
    <name evidence="1" type="primary">ubiB</name>
    <name type="ordered locus">Shew_3375</name>
</gene>
<evidence type="ECO:0000255" key="1">
    <source>
        <dbReference type="HAMAP-Rule" id="MF_00414"/>
    </source>
</evidence>
<accession>A3QIE3</accession>
<reference key="1">
    <citation type="submission" date="2007-03" db="EMBL/GenBank/DDBJ databases">
        <title>Complete sequence of Shewanella loihica PV-4.</title>
        <authorList>
            <consortium name="US DOE Joint Genome Institute"/>
            <person name="Copeland A."/>
            <person name="Lucas S."/>
            <person name="Lapidus A."/>
            <person name="Barry K."/>
            <person name="Detter J.C."/>
            <person name="Glavina del Rio T."/>
            <person name="Hammon N."/>
            <person name="Israni S."/>
            <person name="Dalin E."/>
            <person name="Tice H."/>
            <person name="Pitluck S."/>
            <person name="Chain P."/>
            <person name="Malfatti S."/>
            <person name="Shin M."/>
            <person name="Vergez L."/>
            <person name="Schmutz J."/>
            <person name="Larimer F."/>
            <person name="Land M."/>
            <person name="Hauser L."/>
            <person name="Kyrpides N."/>
            <person name="Mikhailova N."/>
            <person name="Romine M.F."/>
            <person name="Serres G."/>
            <person name="Fredrickson J."/>
            <person name="Tiedje J."/>
            <person name="Richardson P."/>
        </authorList>
    </citation>
    <scope>NUCLEOTIDE SEQUENCE [LARGE SCALE GENOMIC DNA]</scope>
    <source>
        <strain>ATCC BAA-1088 / PV-4</strain>
    </source>
</reference>
<feature type="chain" id="PRO_1000050058" description="Probable protein kinase UbiB">
    <location>
        <begin position="1"/>
        <end position="549"/>
    </location>
</feature>
<feature type="transmembrane region" description="Helical" evidence="1">
    <location>
        <begin position="498"/>
        <end position="518"/>
    </location>
</feature>
<feature type="transmembrane region" description="Helical" evidence="1">
    <location>
        <begin position="520"/>
        <end position="540"/>
    </location>
</feature>
<feature type="domain" description="Protein kinase" evidence="1">
    <location>
        <begin position="123"/>
        <end position="501"/>
    </location>
</feature>
<feature type="active site" description="Proton acceptor" evidence="1">
    <location>
        <position position="287"/>
    </location>
</feature>
<feature type="binding site" evidence="1">
    <location>
        <begin position="129"/>
        <end position="137"/>
    </location>
    <ligand>
        <name>ATP</name>
        <dbReference type="ChEBI" id="CHEBI:30616"/>
    </ligand>
</feature>
<feature type="binding site" evidence="1">
    <location>
        <position position="152"/>
    </location>
    <ligand>
        <name>ATP</name>
        <dbReference type="ChEBI" id="CHEBI:30616"/>
    </ligand>
</feature>
<protein>
    <recommendedName>
        <fullName evidence="1">Probable protein kinase UbiB</fullName>
        <ecNumber evidence="1">2.7.-.-</ecNumber>
    </recommendedName>
    <alternativeName>
        <fullName evidence="1">Ubiquinone biosynthesis protein UbiB</fullName>
    </alternativeName>
</protein>
<proteinExistence type="inferred from homology"/>
<comment type="function">
    <text evidence="1">Is probably a protein kinase regulator of UbiI activity which is involved in aerobic coenzyme Q (ubiquinone) biosynthesis.</text>
</comment>
<comment type="pathway">
    <text>Cofactor biosynthesis; ubiquinone biosynthesis [regulation].</text>
</comment>
<comment type="subcellular location">
    <subcellularLocation>
        <location evidence="1">Cell inner membrane</location>
        <topology evidence="1">Multi-pass membrane protein</topology>
    </subcellularLocation>
</comment>
<comment type="similarity">
    <text evidence="1">Belongs to the ABC1 family. UbiB subfamily.</text>
</comment>
<sequence length="549" mass="63183">MTIKSMRRAYQVVKTVLQYGLDDLIPAKLKPWYFRLLRWSFFWLTNQHKDKVGGERLKLAMQELGPVYIKFGQMLSTRRDLLSDEWAEELAMLQDRVPPFDSAIARAQIEAELGAPIETYFDNFDDTPLASASISQVHTATLKSNGEEVVLKVLRPNVEEKVHADLLLMTQSAQVLETLLGHGNRLRPAEVVEDYRTTIEGELNLKLEALNAIKLRNNFIDSGALYIPKMYEEFCFTRLIVMERIYGVPVSDRAALEAQGTNLKLLAERGVELFFTQVFRDNFFHADMHPGNIFVSTEHPEDPFYIGLDCGIMGTLTEQDKRYLAENFLAFFNRDYTRIAQLYIESGWVAADTDLVAFEQAIKVVCEPMFNKPLDEISFGHVLLELFRTARRFDMVVQPQLVLLEKTLLYIEGLGRQLYPQLDLWQTAKPFLESWMAEQMGPLGMAKKIKKQFPYWTDKLPELPELVYDNLKMGKNFVNSQNQLLDRYLKQQQKAHKSNYLLITSAVLVICGSILFSQNATLWASYACIGIGATLWLLGWRSRPKNRKF</sequence>
<name>UBIB_SHELP</name>
<organism>
    <name type="scientific">Shewanella loihica (strain ATCC BAA-1088 / PV-4)</name>
    <dbReference type="NCBI Taxonomy" id="323850"/>
    <lineage>
        <taxon>Bacteria</taxon>
        <taxon>Pseudomonadati</taxon>
        <taxon>Pseudomonadota</taxon>
        <taxon>Gammaproteobacteria</taxon>
        <taxon>Alteromonadales</taxon>
        <taxon>Shewanellaceae</taxon>
        <taxon>Shewanella</taxon>
    </lineage>
</organism>
<keyword id="KW-0067">ATP-binding</keyword>
<keyword id="KW-0997">Cell inner membrane</keyword>
<keyword id="KW-1003">Cell membrane</keyword>
<keyword id="KW-0418">Kinase</keyword>
<keyword id="KW-0472">Membrane</keyword>
<keyword id="KW-0547">Nucleotide-binding</keyword>
<keyword id="KW-1185">Reference proteome</keyword>
<keyword id="KW-0808">Transferase</keyword>
<keyword id="KW-0812">Transmembrane</keyword>
<keyword id="KW-1133">Transmembrane helix</keyword>
<keyword id="KW-0831">Ubiquinone biosynthesis</keyword>
<dbReference type="EC" id="2.7.-.-" evidence="1"/>
<dbReference type="EMBL" id="CP000606">
    <property type="protein sequence ID" value="ABO25241.1"/>
    <property type="molecule type" value="Genomic_DNA"/>
</dbReference>
<dbReference type="RefSeq" id="WP_011867171.1">
    <property type="nucleotide sequence ID" value="NC_009092.1"/>
</dbReference>
<dbReference type="SMR" id="A3QIE3"/>
<dbReference type="STRING" id="323850.Shew_3375"/>
<dbReference type="KEGG" id="slo:Shew_3375"/>
<dbReference type="eggNOG" id="COG0661">
    <property type="taxonomic scope" value="Bacteria"/>
</dbReference>
<dbReference type="HOGENOM" id="CLU_006533_0_0_6"/>
<dbReference type="OrthoDB" id="9795390at2"/>
<dbReference type="UniPathway" id="UPA00232"/>
<dbReference type="Proteomes" id="UP000001558">
    <property type="component" value="Chromosome"/>
</dbReference>
<dbReference type="GO" id="GO:0005886">
    <property type="term" value="C:plasma membrane"/>
    <property type="evidence" value="ECO:0007669"/>
    <property type="project" value="UniProtKB-SubCell"/>
</dbReference>
<dbReference type="GO" id="GO:0005524">
    <property type="term" value="F:ATP binding"/>
    <property type="evidence" value="ECO:0007669"/>
    <property type="project" value="UniProtKB-KW"/>
</dbReference>
<dbReference type="GO" id="GO:0004672">
    <property type="term" value="F:protein kinase activity"/>
    <property type="evidence" value="ECO:0007669"/>
    <property type="project" value="UniProtKB-UniRule"/>
</dbReference>
<dbReference type="GO" id="GO:0010795">
    <property type="term" value="P:regulation of ubiquinone biosynthetic process"/>
    <property type="evidence" value="ECO:0007669"/>
    <property type="project" value="UniProtKB-UniRule"/>
</dbReference>
<dbReference type="GO" id="GO:0006744">
    <property type="term" value="P:ubiquinone biosynthetic process"/>
    <property type="evidence" value="ECO:0007669"/>
    <property type="project" value="UniProtKB-UniPathway"/>
</dbReference>
<dbReference type="CDD" id="cd13972">
    <property type="entry name" value="UbiB"/>
    <property type="match status" value="1"/>
</dbReference>
<dbReference type="HAMAP" id="MF_00414">
    <property type="entry name" value="UbiB"/>
    <property type="match status" value="1"/>
</dbReference>
<dbReference type="InterPro" id="IPR004147">
    <property type="entry name" value="ABC1_dom"/>
</dbReference>
<dbReference type="InterPro" id="IPR011009">
    <property type="entry name" value="Kinase-like_dom_sf"/>
</dbReference>
<dbReference type="InterPro" id="IPR010232">
    <property type="entry name" value="UbiB"/>
</dbReference>
<dbReference type="InterPro" id="IPR045308">
    <property type="entry name" value="UbiB_bact"/>
</dbReference>
<dbReference type="InterPro" id="IPR050154">
    <property type="entry name" value="UbiB_kinase"/>
</dbReference>
<dbReference type="NCBIfam" id="NF003404">
    <property type="entry name" value="PRK04750.1"/>
    <property type="match status" value="1"/>
</dbReference>
<dbReference type="NCBIfam" id="TIGR01982">
    <property type="entry name" value="UbiB"/>
    <property type="match status" value="1"/>
</dbReference>
<dbReference type="PANTHER" id="PTHR10566">
    <property type="entry name" value="CHAPERONE-ACTIVITY OF BC1 COMPLEX CABC1 -RELATED"/>
    <property type="match status" value="1"/>
</dbReference>
<dbReference type="PANTHER" id="PTHR10566:SF113">
    <property type="entry name" value="PROTEIN ACTIVITY OF BC1 COMPLEX KINASE 7, CHLOROPLASTIC"/>
    <property type="match status" value="1"/>
</dbReference>
<dbReference type="Pfam" id="PF03109">
    <property type="entry name" value="ABC1"/>
    <property type="match status" value="1"/>
</dbReference>
<dbReference type="SUPFAM" id="SSF56112">
    <property type="entry name" value="Protein kinase-like (PK-like)"/>
    <property type="match status" value="1"/>
</dbReference>